<proteinExistence type="inferred from homology"/>
<sequence>MNRALLRAAWSSGTALRAPPSVSRAAVYRSAIHPVNRSFASVSCLQSEQPSSSSSAVPPALEPKDELTGNSTSESTPHIPWYLQEEAPLAESEQTFSRDQIPELPTNPPAILPALLDYVFKDIGLDALKLIDLRGLETPPALGANVIMIIGTARSVKHLNVSADRLCRWLRSTYKLSPYADGLLGRNELKIKLRRKARRARLASRSGTMFDEKDDGITTGWICVNAGVVEETPVKKDESYSFEGFGHTATGTRVVVQIFTEEKRAEVDLESLWQKALDRSEREKQRLSQVNPGAPSEEVRASNSINVSPSDREFGHASRFPTSPLFGQKRLLHTDHRPISQKFDRAAIHAEDTEEALGSQSSSLLRDHDHSDNEKKLRSMDALFDHLSNLSDVQARIELGEGPEDHDSTLFLRLFHDVLSVSSAEEKAIARLVLFCNAISRQHPGYTKRGLYAAFTECTCAGYLVSDDLAFSVVSALLSPRLAGTSSEDVAGQVPEADQELALLVLEHLSLRGTNVVNMRVFDMIYRAVAISPSTTAPDGANDAQTGNKSSLYRVTRLIDTLDLPFEPEQARSLMLSLFQHGDYDDFWKLWRKGPLNGSLRTAADYKMLFRLHADLGDELRARDCVSTWIPMMRREDNPIPLEGELLVDIKRCLMLADPDIVQKAAEGSTSNLARFWNACQMKMLR</sequence>
<gene>
    <name type="primary">atp25</name>
    <name type="ORF">An04g08750</name>
</gene>
<keyword id="KW-0472">Membrane</keyword>
<keyword id="KW-0496">Mitochondrion</keyword>
<keyword id="KW-0999">Mitochondrion inner membrane</keyword>
<keyword id="KW-1185">Reference proteome</keyword>
<keyword id="KW-0809">Transit peptide</keyword>
<reference key="1">
    <citation type="journal article" date="2007" name="Nat. Biotechnol.">
        <title>Genome sequencing and analysis of the versatile cell factory Aspergillus niger CBS 513.88.</title>
        <authorList>
            <person name="Pel H.J."/>
            <person name="de Winde J.H."/>
            <person name="Archer D.B."/>
            <person name="Dyer P.S."/>
            <person name="Hofmann G."/>
            <person name="Schaap P.J."/>
            <person name="Turner G."/>
            <person name="de Vries R.P."/>
            <person name="Albang R."/>
            <person name="Albermann K."/>
            <person name="Andersen M.R."/>
            <person name="Bendtsen J.D."/>
            <person name="Benen J.A.E."/>
            <person name="van den Berg M."/>
            <person name="Breestraat S."/>
            <person name="Caddick M.X."/>
            <person name="Contreras R."/>
            <person name="Cornell M."/>
            <person name="Coutinho P.M."/>
            <person name="Danchin E.G.J."/>
            <person name="Debets A.J.M."/>
            <person name="Dekker P."/>
            <person name="van Dijck P.W.M."/>
            <person name="van Dijk A."/>
            <person name="Dijkhuizen L."/>
            <person name="Driessen A.J.M."/>
            <person name="d'Enfert C."/>
            <person name="Geysens S."/>
            <person name="Goosen C."/>
            <person name="Groot G.S.P."/>
            <person name="de Groot P.W.J."/>
            <person name="Guillemette T."/>
            <person name="Henrissat B."/>
            <person name="Herweijer M."/>
            <person name="van den Hombergh J.P.T.W."/>
            <person name="van den Hondel C.A.M.J.J."/>
            <person name="van der Heijden R.T.J.M."/>
            <person name="van der Kaaij R.M."/>
            <person name="Klis F.M."/>
            <person name="Kools H.J."/>
            <person name="Kubicek C.P."/>
            <person name="van Kuyk P.A."/>
            <person name="Lauber J."/>
            <person name="Lu X."/>
            <person name="van der Maarel M.J.E.C."/>
            <person name="Meulenberg R."/>
            <person name="Menke H."/>
            <person name="Mortimer M.A."/>
            <person name="Nielsen J."/>
            <person name="Oliver S.G."/>
            <person name="Olsthoorn M."/>
            <person name="Pal K."/>
            <person name="van Peij N.N.M.E."/>
            <person name="Ram A.F.J."/>
            <person name="Rinas U."/>
            <person name="Roubos J.A."/>
            <person name="Sagt C.M.J."/>
            <person name="Schmoll M."/>
            <person name="Sun J."/>
            <person name="Ussery D."/>
            <person name="Varga J."/>
            <person name="Vervecken W."/>
            <person name="van de Vondervoort P.J.J."/>
            <person name="Wedler H."/>
            <person name="Woesten H.A.B."/>
            <person name="Zeng A.-P."/>
            <person name="van Ooyen A.J.J."/>
            <person name="Visser J."/>
            <person name="Stam H."/>
        </authorList>
    </citation>
    <scope>NUCLEOTIDE SEQUENCE [LARGE SCALE GENOMIC DNA]</scope>
    <source>
        <strain>ATCC MYA-4892 / CBS 513.88 / FGSC A1513</strain>
    </source>
</reference>
<organism>
    <name type="scientific">Aspergillus niger (strain ATCC MYA-4892 / CBS 513.88 / FGSC A1513)</name>
    <dbReference type="NCBI Taxonomy" id="425011"/>
    <lineage>
        <taxon>Eukaryota</taxon>
        <taxon>Fungi</taxon>
        <taxon>Dikarya</taxon>
        <taxon>Ascomycota</taxon>
        <taxon>Pezizomycotina</taxon>
        <taxon>Eurotiomycetes</taxon>
        <taxon>Eurotiomycetidae</taxon>
        <taxon>Eurotiales</taxon>
        <taxon>Aspergillaceae</taxon>
        <taxon>Aspergillus</taxon>
        <taxon>Aspergillus subgen. Circumdati</taxon>
    </lineage>
</organism>
<dbReference type="EMBL" id="AM270089">
    <property type="protein sequence ID" value="CAK38962.1"/>
    <property type="molecule type" value="Genomic_DNA"/>
</dbReference>
<dbReference type="SMR" id="A2QJZ0"/>
<dbReference type="EnsemblFungi" id="CAK38962">
    <property type="protein sequence ID" value="CAK38962"/>
    <property type="gene ID" value="An04g08750"/>
</dbReference>
<dbReference type="VEuPathDB" id="FungiDB:An04g08750"/>
<dbReference type="HOGENOM" id="CLU_016140_0_0_1"/>
<dbReference type="Proteomes" id="UP000006706">
    <property type="component" value="Chromosome 6L"/>
</dbReference>
<dbReference type="GO" id="GO:0005743">
    <property type="term" value="C:mitochondrial inner membrane"/>
    <property type="evidence" value="ECO:0007669"/>
    <property type="project" value="UniProtKB-SubCell"/>
</dbReference>
<dbReference type="GO" id="GO:0140053">
    <property type="term" value="P:mitochondrial gene expression"/>
    <property type="evidence" value="ECO:0007669"/>
    <property type="project" value="InterPro"/>
</dbReference>
<dbReference type="GO" id="GO:0048255">
    <property type="term" value="P:mRNA stabilization"/>
    <property type="evidence" value="ECO:0007669"/>
    <property type="project" value="TreeGrafter"/>
</dbReference>
<dbReference type="FunFam" id="3.30.460.10:FF:000044">
    <property type="entry name" value="ATPase synthesis protein 25, mitochondrial"/>
    <property type="match status" value="1"/>
</dbReference>
<dbReference type="Gene3D" id="3.30.460.10">
    <property type="entry name" value="Beta Polymerase, domain 2"/>
    <property type="match status" value="1"/>
</dbReference>
<dbReference type="InterPro" id="IPR040152">
    <property type="entry name" value="Atp25"/>
</dbReference>
<dbReference type="InterPro" id="IPR043519">
    <property type="entry name" value="NT_sf"/>
</dbReference>
<dbReference type="PANTHER" id="PTHR28087">
    <property type="entry name" value="ATPASE SYNTHESIS PROTEIN 25, MITOCHONDRIAL"/>
    <property type="match status" value="1"/>
</dbReference>
<dbReference type="PANTHER" id="PTHR28087:SF1">
    <property type="entry name" value="ATPASE SYNTHESIS PROTEIN 25, MITOCHONDRIAL"/>
    <property type="match status" value="1"/>
</dbReference>
<dbReference type="Pfam" id="PF02410">
    <property type="entry name" value="RsfS"/>
    <property type="match status" value="1"/>
</dbReference>
<dbReference type="SUPFAM" id="SSF81301">
    <property type="entry name" value="Nucleotidyltransferase"/>
    <property type="match status" value="1"/>
</dbReference>
<evidence type="ECO:0000250" key="1"/>
<evidence type="ECO:0000255" key="2"/>
<evidence type="ECO:0000256" key="3">
    <source>
        <dbReference type="SAM" id="MobiDB-lite"/>
    </source>
</evidence>
<evidence type="ECO:0000305" key="4"/>
<comment type="function">
    <text evidence="1">Probable mitochondrial mRNA stabilization factor.</text>
</comment>
<comment type="subcellular location">
    <subcellularLocation>
        <location evidence="1">Mitochondrion inner membrane</location>
        <topology evidence="1">Peripheral membrane protein</topology>
        <orientation evidence="1">Matrix side</orientation>
    </subcellularLocation>
</comment>
<comment type="similarity">
    <text evidence="4">Belongs to the ATP25 family.</text>
</comment>
<feature type="transit peptide" description="Mitochondrion" evidence="2">
    <location>
        <begin position="1"/>
        <end position="39"/>
    </location>
</feature>
<feature type="chain" id="PRO_5000219952" description="ATPase synthesis protein 25, mitochondrial">
    <location>
        <begin position="40"/>
        <end position="686"/>
    </location>
</feature>
<feature type="region of interest" description="Disordered" evidence="3">
    <location>
        <begin position="48"/>
        <end position="77"/>
    </location>
</feature>
<feature type="region of interest" description="Disordered" evidence="3">
    <location>
        <begin position="280"/>
        <end position="319"/>
    </location>
</feature>
<feature type="region of interest" description="Disordered" evidence="3">
    <location>
        <begin position="352"/>
        <end position="372"/>
    </location>
</feature>
<feature type="compositionally biased region" description="Low complexity" evidence="3">
    <location>
        <begin position="48"/>
        <end position="59"/>
    </location>
</feature>
<accession>A2QJZ0</accession>
<protein>
    <recommendedName>
        <fullName>ATPase synthesis protein 25, mitochondrial</fullName>
    </recommendedName>
</protein>
<name>ATP25_ASPNC</name>